<sequence>MAEITAKLVKELREKSGAGVMDAKKALVETDGDLDKAIELLREKGMAKAAKKADRVAAEGLTGVYVDGNVAAVIEVNAETDFVAKNDQFVTLVNETAKVIAEGRPSNNEEALALTMPSGETLEQAFVTATATIGEKISFRRFALVEKTDEQHFGAYQHNGGRIGVITVVEGGDDALAKQVSMHVAAMKPTVLSYTELDAQFVHDELAQLNHKIEQDNESRAMVNKPALPFLKYGSKAQLTDEVIAQAEEDIKAELAAEGKPEKIWDKIVPGKMDRFMLDNTKVDQEYTLLAQVYIMDDSKTVEAYLESVNAKAVAFVRFEVGEGIEKASNDFEAEVAATMAAALEK</sequence>
<organism>
    <name type="scientific">Streptococcus agalactiae serotype Ia (strain ATCC 27591 / A909 / CDC SS700)</name>
    <dbReference type="NCBI Taxonomy" id="205921"/>
    <lineage>
        <taxon>Bacteria</taxon>
        <taxon>Bacillati</taxon>
        <taxon>Bacillota</taxon>
        <taxon>Bacilli</taxon>
        <taxon>Lactobacillales</taxon>
        <taxon>Streptococcaceae</taxon>
        <taxon>Streptococcus</taxon>
    </lineage>
</organism>
<name>EFTS_STRA1</name>
<gene>
    <name evidence="1" type="primary">tsf</name>
    <name type="ordered locus">SAK_1851</name>
</gene>
<comment type="function">
    <text evidence="1">Associates with the EF-Tu.GDP complex and induces the exchange of GDP to GTP. It remains bound to the aminoacyl-tRNA.EF-Tu.GTP complex up to the GTP hydrolysis stage on the ribosome.</text>
</comment>
<comment type="subcellular location">
    <subcellularLocation>
        <location evidence="1">Cytoplasm</location>
    </subcellularLocation>
</comment>
<comment type="similarity">
    <text evidence="1">Belongs to the EF-Ts family.</text>
</comment>
<reference key="1">
    <citation type="journal article" date="2005" name="Proc. Natl. Acad. Sci. U.S.A.">
        <title>Genome analysis of multiple pathogenic isolates of Streptococcus agalactiae: implications for the microbial 'pan-genome'.</title>
        <authorList>
            <person name="Tettelin H."/>
            <person name="Masignani V."/>
            <person name="Cieslewicz M.J."/>
            <person name="Donati C."/>
            <person name="Medini D."/>
            <person name="Ward N.L."/>
            <person name="Angiuoli S.V."/>
            <person name="Crabtree J."/>
            <person name="Jones A.L."/>
            <person name="Durkin A.S."/>
            <person name="DeBoy R.T."/>
            <person name="Davidsen T.M."/>
            <person name="Mora M."/>
            <person name="Scarselli M."/>
            <person name="Margarit y Ros I."/>
            <person name="Peterson J.D."/>
            <person name="Hauser C.R."/>
            <person name="Sundaram J.P."/>
            <person name="Nelson W.C."/>
            <person name="Madupu R."/>
            <person name="Brinkac L.M."/>
            <person name="Dodson R.J."/>
            <person name="Rosovitz M.J."/>
            <person name="Sullivan S.A."/>
            <person name="Daugherty S.C."/>
            <person name="Haft D.H."/>
            <person name="Selengut J."/>
            <person name="Gwinn M.L."/>
            <person name="Zhou L."/>
            <person name="Zafar N."/>
            <person name="Khouri H."/>
            <person name="Radune D."/>
            <person name="Dimitrov G."/>
            <person name="Watkins K."/>
            <person name="O'Connor K.J."/>
            <person name="Smith S."/>
            <person name="Utterback T.R."/>
            <person name="White O."/>
            <person name="Rubens C.E."/>
            <person name="Grandi G."/>
            <person name="Madoff L.C."/>
            <person name="Kasper D.L."/>
            <person name="Telford J.L."/>
            <person name="Wessels M.R."/>
            <person name="Rappuoli R."/>
            <person name="Fraser C.M."/>
        </authorList>
    </citation>
    <scope>NUCLEOTIDE SEQUENCE [LARGE SCALE GENOMIC DNA]</scope>
    <source>
        <strain>ATCC 27591 / A909 / CDC SS700</strain>
    </source>
</reference>
<keyword id="KW-0963">Cytoplasm</keyword>
<keyword id="KW-0251">Elongation factor</keyword>
<keyword id="KW-0648">Protein biosynthesis</keyword>
<feature type="chain" id="PRO_0000241535" description="Elongation factor Ts">
    <location>
        <begin position="1"/>
        <end position="346"/>
    </location>
</feature>
<feature type="region of interest" description="Involved in Mg(2+) ion dislocation from EF-Tu" evidence="1">
    <location>
        <begin position="80"/>
        <end position="83"/>
    </location>
</feature>
<proteinExistence type="inferred from homology"/>
<evidence type="ECO:0000255" key="1">
    <source>
        <dbReference type="HAMAP-Rule" id="MF_00050"/>
    </source>
</evidence>
<dbReference type="EMBL" id="CP000114">
    <property type="protein sequence ID" value="ABA44553.1"/>
    <property type="molecule type" value="Genomic_DNA"/>
</dbReference>
<dbReference type="RefSeq" id="WP_000808080.1">
    <property type="nucleotide sequence ID" value="NC_007432.1"/>
</dbReference>
<dbReference type="SMR" id="Q3JZ55"/>
<dbReference type="GeneID" id="66886668"/>
<dbReference type="KEGG" id="sak:SAK_1851"/>
<dbReference type="HOGENOM" id="CLU_047155_0_1_9"/>
<dbReference type="GO" id="GO:0005737">
    <property type="term" value="C:cytoplasm"/>
    <property type="evidence" value="ECO:0007669"/>
    <property type="project" value="UniProtKB-SubCell"/>
</dbReference>
<dbReference type="GO" id="GO:0003746">
    <property type="term" value="F:translation elongation factor activity"/>
    <property type="evidence" value="ECO:0007669"/>
    <property type="project" value="UniProtKB-UniRule"/>
</dbReference>
<dbReference type="CDD" id="cd14275">
    <property type="entry name" value="UBA_EF-Ts"/>
    <property type="match status" value="1"/>
</dbReference>
<dbReference type="FunFam" id="1.10.286.20:FF:000004">
    <property type="entry name" value="Elongation factor Ts"/>
    <property type="match status" value="1"/>
</dbReference>
<dbReference type="FunFam" id="1.10.8.10:FF:000001">
    <property type="entry name" value="Elongation factor Ts"/>
    <property type="match status" value="1"/>
</dbReference>
<dbReference type="FunFam" id="3.30.479.20:FF:000013">
    <property type="entry name" value="Elongation factor Ts"/>
    <property type="match status" value="1"/>
</dbReference>
<dbReference type="Gene3D" id="1.10.286.20">
    <property type="match status" value="1"/>
</dbReference>
<dbReference type="Gene3D" id="1.10.8.10">
    <property type="entry name" value="DNA helicase RuvA subunit, C-terminal domain"/>
    <property type="match status" value="1"/>
</dbReference>
<dbReference type="Gene3D" id="3.30.479.20">
    <property type="entry name" value="Elongation factor Ts, dimerisation domain"/>
    <property type="match status" value="2"/>
</dbReference>
<dbReference type="HAMAP" id="MF_00050">
    <property type="entry name" value="EF_Ts"/>
    <property type="match status" value="1"/>
</dbReference>
<dbReference type="InterPro" id="IPR036402">
    <property type="entry name" value="EF-Ts_dimer_sf"/>
</dbReference>
<dbReference type="InterPro" id="IPR001816">
    <property type="entry name" value="Transl_elong_EFTs/EF1B"/>
</dbReference>
<dbReference type="InterPro" id="IPR014039">
    <property type="entry name" value="Transl_elong_EFTs/EF1B_dimer"/>
</dbReference>
<dbReference type="InterPro" id="IPR018101">
    <property type="entry name" value="Transl_elong_Ts_CS"/>
</dbReference>
<dbReference type="InterPro" id="IPR009060">
    <property type="entry name" value="UBA-like_sf"/>
</dbReference>
<dbReference type="NCBIfam" id="TIGR00116">
    <property type="entry name" value="tsf"/>
    <property type="match status" value="1"/>
</dbReference>
<dbReference type="PANTHER" id="PTHR11741">
    <property type="entry name" value="ELONGATION FACTOR TS"/>
    <property type="match status" value="1"/>
</dbReference>
<dbReference type="PANTHER" id="PTHR11741:SF0">
    <property type="entry name" value="ELONGATION FACTOR TS, MITOCHONDRIAL"/>
    <property type="match status" value="1"/>
</dbReference>
<dbReference type="Pfam" id="PF00889">
    <property type="entry name" value="EF_TS"/>
    <property type="match status" value="2"/>
</dbReference>
<dbReference type="SUPFAM" id="SSF54713">
    <property type="entry name" value="Elongation factor Ts (EF-Ts), dimerisation domain"/>
    <property type="match status" value="1"/>
</dbReference>
<dbReference type="SUPFAM" id="SSF46934">
    <property type="entry name" value="UBA-like"/>
    <property type="match status" value="1"/>
</dbReference>
<dbReference type="PROSITE" id="PS01126">
    <property type="entry name" value="EF_TS_1"/>
    <property type="match status" value="1"/>
</dbReference>
<dbReference type="PROSITE" id="PS01127">
    <property type="entry name" value="EF_TS_2"/>
    <property type="match status" value="1"/>
</dbReference>
<protein>
    <recommendedName>
        <fullName evidence="1">Elongation factor Ts</fullName>
        <shortName evidence="1">EF-Ts</shortName>
    </recommendedName>
</protein>
<accession>Q3JZ55</accession>